<organism>
    <name type="scientific">Candida glabrata (strain ATCC 2001 / BCRC 20586 / JCM 3761 / NBRC 0622 / NRRL Y-65 / CBS 138)</name>
    <name type="common">Yeast</name>
    <name type="synonym">Nakaseomyces glabratus</name>
    <dbReference type="NCBI Taxonomy" id="284593"/>
    <lineage>
        <taxon>Eukaryota</taxon>
        <taxon>Fungi</taxon>
        <taxon>Dikarya</taxon>
        <taxon>Ascomycota</taxon>
        <taxon>Saccharomycotina</taxon>
        <taxon>Saccharomycetes</taxon>
        <taxon>Saccharomycetales</taxon>
        <taxon>Saccharomycetaceae</taxon>
        <taxon>Nakaseomyces</taxon>
    </lineage>
</organism>
<evidence type="ECO:0000250" key="1"/>
<evidence type="ECO:0000255" key="2"/>
<evidence type="ECO:0000256" key="3">
    <source>
        <dbReference type="SAM" id="MobiDB-lite"/>
    </source>
</evidence>
<evidence type="ECO:0000305" key="4"/>
<protein>
    <recommendedName>
        <fullName evidence="4">Small ribosomal subunit protein mS41</fullName>
    </recommendedName>
    <alternativeName>
        <fullName>Protein FYV4, mitochondrial</fullName>
    </alternativeName>
</protein>
<keyword id="KW-0496">Mitochondrion</keyword>
<keyword id="KW-1185">Reference proteome</keyword>
<keyword id="KW-0687">Ribonucleoprotein</keyword>
<keyword id="KW-0689">Ribosomal protein</keyword>
<keyword id="KW-0809">Transit peptide</keyword>
<dbReference type="EMBL" id="CR380950">
    <property type="protein sequence ID" value="CAG58492.1"/>
    <property type="molecule type" value="Genomic_DNA"/>
</dbReference>
<dbReference type="RefSeq" id="XP_445581.1">
    <property type="nucleotide sequence ID" value="XM_445581.1"/>
</dbReference>
<dbReference type="SMR" id="Q6FW13"/>
<dbReference type="FunCoup" id="Q6FW13">
    <property type="interactions" value="152"/>
</dbReference>
<dbReference type="STRING" id="284593.Q6FW13"/>
<dbReference type="EnsemblFungi" id="CAGL0D03806g-T">
    <property type="protein sequence ID" value="CAGL0D03806g-T-p1"/>
    <property type="gene ID" value="CAGL0D03806g"/>
</dbReference>
<dbReference type="KEGG" id="cgr:2887227"/>
<dbReference type="CGD" id="CAL0128127">
    <property type="gene designation" value="CAGL0D03806g"/>
</dbReference>
<dbReference type="VEuPathDB" id="FungiDB:B1J91_D03806g"/>
<dbReference type="VEuPathDB" id="FungiDB:CAGL0D03806g"/>
<dbReference type="eggNOG" id="ENOG502SCMV">
    <property type="taxonomic scope" value="Eukaryota"/>
</dbReference>
<dbReference type="HOGENOM" id="CLU_126121_2_0_1"/>
<dbReference type="InParanoid" id="Q6FW13"/>
<dbReference type="OMA" id="FENKWEN"/>
<dbReference type="Proteomes" id="UP000002428">
    <property type="component" value="Chromosome D"/>
</dbReference>
<dbReference type="GO" id="GO:0005739">
    <property type="term" value="C:mitochondrion"/>
    <property type="evidence" value="ECO:0007669"/>
    <property type="project" value="UniProtKB-SubCell"/>
</dbReference>
<dbReference type="GO" id="GO:1990904">
    <property type="term" value="C:ribonucleoprotein complex"/>
    <property type="evidence" value="ECO:0007669"/>
    <property type="project" value="UniProtKB-KW"/>
</dbReference>
<dbReference type="GO" id="GO:0005840">
    <property type="term" value="C:ribosome"/>
    <property type="evidence" value="ECO:0007669"/>
    <property type="project" value="UniProtKB-KW"/>
</dbReference>
<dbReference type="InterPro" id="IPR039603">
    <property type="entry name" value="Ribosomal_mS41"/>
</dbReference>
<dbReference type="InterPro" id="IPR019083">
    <property type="entry name" value="SAM_Ribosomal_mS41"/>
</dbReference>
<dbReference type="PANTHER" id="PTHR28235">
    <property type="entry name" value="PROTEIN FYV4, MITOCHONDRIAL"/>
    <property type="match status" value="1"/>
</dbReference>
<dbReference type="PANTHER" id="PTHR28235:SF1">
    <property type="entry name" value="SMALL RIBOSOMAL SUBUNIT PROTEIN MS41"/>
    <property type="match status" value="1"/>
</dbReference>
<dbReference type="Pfam" id="PF09597">
    <property type="entry name" value="SAM_Ribosomal_mS41"/>
    <property type="match status" value="1"/>
</dbReference>
<dbReference type="SMART" id="SM01238">
    <property type="entry name" value="IGR"/>
    <property type="match status" value="1"/>
</dbReference>
<name>FYV4_CANGA</name>
<accession>Q6FW13</accession>
<gene>
    <name type="primary">FYV4</name>
    <name type="ordered locus">CAGL0D03806g</name>
</gene>
<reference key="1">
    <citation type="journal article" date="2004" name="Nature">
        <title>Genome evolution in yeasts.</title>
        <authorList>
            <person name="Dujon B."/>
            <person name="Sherman D."/>
            <person name="Fischer G."/>
            <person name="Durrens P."/>
            <person name="Casaregola S."/>
            <person name="Lafontaine I."/>
            <person name="de Montigny J."/>
            <person name="Marck C."/>
            <person name="Neuveglise C."/>
            <person name="Talla E."/>
            <person name="Goffard N."/>
            <person name="Frangeul L."/>
            <person name="Aigle M."/>
            <person name="Anthouard V."/>
            <person name="Babour A."/>
            <person name="Barbe V."/>
            <person name="Barnay S."/>
            <person name="Blanchin S."/>
            <person name="Beckerich J.-M."/>
            <person name="Beyne E."/>
            <person name="Bleykasten C."/>
            <person name="Boisrame A."/>
            <person name="Boyer J."/>
            <person name="Cattolico L."/>
            <person name="Confanioleri F."/>
            <person name="de Daruvar A."/>
            <person name="Despons L."/>
            <person name="Fabre E."/>
            <person name="Fairhead C."/>
            <person name="Ferry-Dumazet H."/>
            <person name="Groppi A."/>
            <person name="Hantraye F."/>
            <person name="Hennequin C."/>
            <person name="Jauniaux N."/>
            <person name="Joyet P."/>
            <person name="Kachouri R."/>
            <person name="Kerrest A."/>
            <person name="Koszul R."/>
            <person name="Lemaire M."/>
            <person name="Lesur I."/>
            <person name="Ma L."/>
            <person name="Muller H."/>
            <person name="Nicaud J.-M."/>
            <person name="Nikolski M."/>
            <person name="Oztas S."/>
            <person name="Ozier-Kalogeropoulos O."/>
            <person name="Pellenz S."/>
            <person name="Potier S."/>
            <person name="Richard G.-F."/>
            <person name="Straub M.-L."/>
            <person name="Suleau A."/>
            <person name="Swennen D."/>
            <person name="Tekaia F."/>
            <person name="Wesolowski-Louvel M."/>
            <person name="Westhof E."/>
            <person name="Wirth B."/>
            <person name="Zeniou-Meyer M."/>
            <person name="Zivanovic Y."/>
            <person name="Bolotin-Fukuhara M."/>
            <person name="Thierry A."/>
            <person name="Bouchier C."/>
            <person name="Caudron B."/>
            <person name="Scarpelli C."/>
            <person name="Gaillardin C."/>
            <person name="Weissenbach J."/>
            <person name="Wincker P."/>
            <person name="Souciet J.-L."/>
        </authorList>
    </citation>
    <scope>NUCLEOTIDE SEQUENCE [LARGE SCALE GENOMIC DNA]</scope>
    <source>
        <strain>ATCC 2001 / BCRC 20586 / JCM 3761 / NBRC 0622 / NRRL Y-65 / CBS 138</strain>
    </source>
</reference>
<comment type="function">
    <text evidence="1">Involved in telomere length regulation.</text>
</comment>
<comment type="subcellular location">
    <subcellularLocation>
        <location evidence="1">Mitochondrion</location>
    </subcellularLocation>
</comment>
<comment type="similarity">
    <text evidence="4">Belongs to the mitochondrion-specific ribosomal protein mS41 family.</text>
</comment>
<sequence>MLSIFGCVRAVPRVVQMSARRTLKVPAPSQSIPDVEAFLKTIGRDCSELTETFENKWENLFEWDSKTLKSKGVSVQQRRYILHQAQKFRNGEPVKEMKKGKKSFFGGERNRKATVAKWRAEQRNK</sequence>
<proteinExistence type="inferred from homology"/>
<feature type="transit peptide" description="Mitochondrion" evidence="2">
    <location>
        <begin position="1"/>
        <end position="10"/>
    </location>
</feature>
<feature type="chain" id="PRO_0000292470" description="Small ribosomal subunit protein mS41">
    <location>
        <begin position="11"/>
        <end position="125"/>
    </location>
</feature>
<feature type="region of interest" description="Disordered" evidence="3">
    <location>
        <begin position="103"/>
        <end position="125"/>
    </location>
</feature>